<gene>
    <name type="primary">NOP1</name>
    <name type="ordered locus">ECU10_0820</name>
</gene>
<keyword id="KW-0488">Methylation</keyword>
<keyword id="KW-0489">Methyltransferase</keyword>
<keyword id="KW-0539">Nucleus</keyword>
<keyword id="KW-1185">Reference proteome</keyword>
<keyword id="KW-0687">Ribonucleoprotein</keyword>
<keyword id="KW-0694">RNA-binding</keyword>
<keyword id="KW-0698">rRNA processing</keyword>
<keyword id="KW-0949">S-adenosyl-L-methionine</keyword>
<keyword id="KW-0808">Transferase</keyword>
<accession>Q8SR42</accession>
<proteinExistence type="inferred from homology"/>
<dbReference type="EC" id="2.1.1.-"/>
<dbReference type="EMBL" id="AL590449">
    <property type="protein sequence ID" value="CAD25801.1"/>
    <property type="molecule type" value="Genomic_DNA"/>
</dbReference>
<dbReference type="RefSeq" id="NP_586197.1">
    <property type="nucleotide sequence ID" value="NM_001042030.1"/>
</dbReference>
<dbReference type="SMR" id="Q8SR42"/>
<dbReference type="FunCoup" id="Q8SR42">
    <property type="interactions" value="216"/>
</dbReference>
<dbReference type="STRING" id="284813.Q8SR42"/>
<dbReference type="GeneID" id="859846"/>
<dbReference type="KEGG" id="ecu:ECU10_0820"/>
<dbReference type="VEuPathDB" id="MicrosporidiaDB:ECU10_0820"/>
<dbReference type="HOGENOM" id="CLU_059055_1_0_1"/>
<dbReference type="InParanoid" id="Q8SR42"/>
<dbReference type="OMA" id="WNPNKSK"/>
<dbReference type="OrthoDB" id="1859733at2759"/>
<dbReference type="Proteomes" id="UP000000819">
    <property type="component" value="Chromosome X"/>
</dbReference>
<dbReference type="GO" id="GO:0031428">
    <property type="term" value="C:box C/D methylation guide snoRNP complex"/>
    <property type="evidence" value="ECO:0007669"/>
    <property type="project" value="TreeGrafter"/>
</dbReference>
<dbReference type="GO" id="GO:0005730">
    <property type="term" value="C:nucleolus"/>
    <property type="evidence" value="ECO:0007669"/>
    <property type="project" value="UniProtKB-SubCell"/>
</dbReference>
<dbReference type="GO" id="GO:0032040">
    <property type="term" value="C:small-subunit processome"/>
    <property type="evidence" value="ECO:0007669"/>
    <property type="project" value="TreeGrafter"/>
</dbReference>
<dbReference type="GO" id="GO:1990259">
    <property type="term" value="F:histone H2AQ104 methyltransferase activity"/>
    <property type="evidence" value="ECO:0007669"/>
    <property type="project" value="TreeGrafter"/>
</dbReference>
<dbReference type="GO" id="GO:0003723">
    <property type="term" value="F:RNA binding"/>
    <property type="evidence" value="ECO:0007669"/>
    <property type="project" value="UniProtKB-KW"/>
</dbReference>
<dbReference type="GO" id="GO:0008649">
    <property type="term" value="F:rRNA methyltransferase activity"/>
    <property type="evidence" value="ECO:0007669"/>
    <property type="project" value="TreeGrafter"/>
</dbReference>
<dbReference type="GO" id="GO:0000494">
    <property type="term" value="P:box C/D sno(s)RNA 3'-end processing"/>
    <property type="evidence" value="ECO:0007669"/>
    <property type="project" value="TreeGrafter"/>
</dbReference>
<dbReference type="FunFam" id="3.30.200.20:FF:000386">
    <property type="entry name" value="Fibrillarin, putative"/>
    <property type="match status" value="1"/>
</dbReference>
<dbReference type="Gene3D" id="3.30.200.20">
    <property type="entry name" value="Phosphorylase Kinase, domain 1"/>
    <property type="match status" value="1"/>
</dbReference>
<dbReference type="Gene3D" id="3.40.50.150">
    <property type="entry name" value="Vaccinia Virus protein VP39"/>
    <property type="match status" value="1"/>
</dbReference>
<dbReference type="HAMAP" id="MF_00351">
    <property type="entry name" value="RNA_methyltransf_FlpA"/>
    <property type="match status" value="1"/>
</dbReference>
<dbReference type="InterPro" id="IPR000692">
    <property type="entry name" value="Fibrillarin"/>
</dbReference>
<dbReference type="InterPro" id="IPR020813">
    <property type="entry name" value="Fibrillarin_CS"/>
</dbReference>
<dbReference type="InterPro" id="IPR029063">
    <property type="entry name" value="SAM-dependent_MTases_sf"/>
</dbReference>
<dbReference type="NCBIfam" id="NF003276">
    <property type="entry name" value="PRK04266.1-2"/>
    <property type="match status" value="1"/>
</dbReference>
<dbReference type="PANTHER" id="PTHR10335:SF17">
    <property type="entry name" value="FIBRILLARIN"/>
    <property type="match status" value="1"/>
</dbReference>
<dbReference type="PANTHER" id="PTHR10335">
    <property type="entry name" value="RRNA 2-O-METHYLTRANSFERASE FIBRILLARIN"/>
    <property type="match status" value="1"/>
</dbReference>
<dbReference type="Pfam" id="PF01269">
    <property type="entry name" value="Fibrillarin"/>
    <property type="match status" value="1"/>
</dbReference>
<dbReference type="PIRSF" id="PIRSF006540">
    <property type="entry name" value="Nop17p"/>
    <property type="match status" value="1"/>
</dbReference>
<dbReference type="PRINTS" id="PR00052">
    <property type="entry name" value="FIBRILLARIN"/>
</dbReference>
<dbReference type="SMART" id="SM01206">
    <property type="entry name" value="Fibrillarin"/>
    <property type="match status" value="1"/>
</dbReference>
<dbReference type="SUPFAM" id="SSF53335">
    <property type="entry name" value="S-adenosyl-L-methionine-dependent methyltransferases"/>
    <property type="match status" value="1"/>
</dbReference>
<dbReference type="PROSITE" id="PS00566">
    <property type="entry name" value="FIBRILLARIN"/>
    <property type="match status" value="1"/>
</dbReference>
<feature type="chain" id="PRO_0000148524" description="rRNA 2'-O-methyltransferase fibrillarin">
    <location>
        <begin position="1"/>
        <end position="291"/>
    </location>
</feature>
<feature type="region of interest" description="Disordered" evidence="2">
    <location>
        <begin position="1"/>
        <end position="45"/>
    </location>
</feature>
<feature type="compositionally biased region" description="Basic and acidic residues" evidence="2">
    <location>
        <begin position="1"/>
        <end position="12"/>
    </location>
</feature>
<feature type="compositionally biased region" description="Basic and acidic residues" evidence="2">
    <location>
        <begin position="20"/>
        <end position="29"/>
    </location>
</feature>
<feature type="binding site" evidence="1">
    <location>
        <begin position="134"/>
        <end position="135"/>
    </location>
    <ligand>
        <name>S-adenosyl-L-methionine</name>
        <dbReference type="ChEBI" id="CHEBI:59789"/>
    </ligand>
</feature>
<feature type="binding site" evidence="1">
    <location>
        <begin position="153"/>
        <end position="154"/>
    </location>
    <ligand>
        <name>S-adenosyl-L-methionine</name>
        <dbReference type="ChEBI" id="CHEBI:59789"/>
    </ligand>
</feature>
<feature type="binding site" evidence="1">
    <location>
        <begin position="178"/>
        <end position="179"/>
    </location>
    <ligand>
        <name>S-adenosyl-L-methionine</name>
        <dbReference type="ChEBI" id="CHEBI:59789"/>
    </ligand>
</feature>
<feature type="binding site" evidence="1">
    <location>
        <begin position="198"/>
        <end position="201"/>
    </location>
    <ligand>
        <name>S-adenosyl-L-methionine</name>
        <dbReference type="ChEBI" id="CHEBI:59789"/>
    </ligand>
</feature>
<feature type="modified residue" description="Asymmetric dimethylarginine" evidence="1">
    <location>
        <position position="28"/>
    </location>
</feature>
<feature type="modified residue" description="Asymmetric dimethylarginine" evidence="1">
    <location>
        <position position="62"/>
    </location>
</feature>
<sequence>MKKTNKRPDGRKFQKGGKPFRSDKGEGRGRMNNKKKGSVNAGLDRKVLVEPHPRFPGVYISRGKEDLLLTRNLVPGVSVYGEKRVAVDLEGMKVEYRVWNAYRSKLAAGIVCGAENIHMEPGSKVLYLGASSGTTVSHVSDIVGKDGVVYAVEFSERSGRDLINMSMKRPNIVPIIEDARYPSRYRMLVPIVDCIFSDVSQPDQTRIVALNAQYFLKEGGGVDVSIKANCVNSAVPAETVFADEVNILRKNSIRPKEQVTLEPFEKDHAMIIGRFKLSASEEKRQSSQKKD</sequence>
<name>FBRL_ENCCU</name>
<protein>
    <recommendedName>
        <fullName>rRNA 2'-O-methyltransferase fibrillarin</fullName>
        <ecNumber>2.1.1.-</ecNumber>
    </recommendedName>
    <alternativeName>
        <fullName>Histone-glutamine methyltransferase</fullName>
    </alternativeName>
</protein>
<organism>
    <name type="scientific">Encephalitozoon cuniculi (strain GB-M1)</name>
    <name type="common">Microsporidian parasite</name>
    <dbReference type="NCBI Taxonomy" id="284813"/>
    <lineage>
        <taxon>Eukaryota</taxon>
        <taxon>Fungi</taxon>
        <taxon>Fungi incertae sedis</taxon>
        <taxon>Microsporidia</taxon>
        <taxon>Unikaryonidae</taxon>
        <taxon>Encephalitozoon</taxon>
    </lineage>
</organism>
<evidence type="ECO:0000250" key="1"/>
<evidence type="ECO:0000256" key="2">
    <source>
        <dbReference type="SAM" id="MobiDB-lite"/>
    </source>
</evidence>
<evidence type="ECO:0000305" key="3"/>
<reference key="1">
    <citation type="journal article" date="2001" name="Nature">
        <title>Genome sequence and gene compaction of the eukaryote parasite Encephalitozoon cuniculi.</title>
        <authorList>
            <person name="Katinka M.D."/>
            <person name="Duprat S."/>
            <person name="Cornillot E."/>
            <person name="Metenier G."/>
            <person name="Thomarat F."/>
            <person name="Prensier G."/>
            <person name="Barbe V."/>
            <person name="Peyretaillade E."/>
            <person name="Brottier P."/>
            <person name="Wincker P."/>
            <person name="Delbac F."/>
            <person name="El Alaoui H."/>
            <person name="Peyret P."/>
            <person name="Saurin W."/>
            <person name="Gouy M."/>
            <person name="Weissenbach J."/>
            <person name="Vivares C.P."/>
        </authorList>
    </citation>
    <scope>NUCLEOTIDE SEQUENCE [LARGE SCALE GENOMIC DNA]</scope>
    <source>
        <strain>GB-M1</strain>
    </source>
</reference>
<comment type="function">
    <text evidence="1">S-adenosyl-L-methionine-dependent methyltransferase that has the ability to methylate both RNAs and proteins. Involved in pre-rRNA processing. Utilizes the methyl donor S-adenosyl-L-methionine to catalyze the site-specific 2'-hydroxyl methylation of ribose moieties in pre-ribosomal RNA. Site specificity is provided by a guide RNA that base pairs with the substrate. Methylation occurs at a characteristic distance from the sequence involved in base pairing with the guide RNA. Also acts as a protein methyltransferase by mediating methylation of 'Gln-105' of histone H2A (H2AQ105me), a modification that impairs binding of the FACT complex and is specifically present at 35S ribosomal DNA locus (By similarity).</text>
</comment>
<comment type="catalytic activity">
    <reaction>
        <text>L-glutaminyl-[histone H2A] + S-adenosyl-L-methionine = N(5)-methyl-L-glutaminyl-[histone H2A] + S-adenosyl-L-homocysteine + H(+)</text>
        <dbReference type="Rhea" id="RHEA:50904"/>
        <dbReference type="Rhea" id="RHEA-COMP:12837"/>
        <dbReference type="Rhea" id="RHEA-COMP:12839"/>
        <dbReference type="ChEBI" id="CHEBI:15378"/>
        <dbReference type="ChEBI" id="CHEBI:30011"/>
        <dbReference type="ChEBI" id="CHEBI:57856"/>
        <dbReference type="ChEBI" id="CHEBI:59789"/>
        <dbReference type="ChEBI" id="CHEBI:61891"/>
    </reaction>
</comment>
<comment type="subunit">
    <text evidence="1">Component of box C/D small nucleolar ribonucleoprotein (snoRNP) particles.</text>
</comment>
<comment type="subcellular location">
    <subcellularLocation>
        <location evidence="1">Nucleus</location>
        <location evidence="1">Nucleolus</location>
    </subcellularLocation>
    <text evidence="1">Fibrillar region of the nucleolus.</text>
</comment>
<comment type="similarity">
    <text evidence="3">Belongs to the methyltransferase superfamily. Fibrillarin family.</text>
</comment>